<accession>B1WSW1</accession>
<proteinExistence type="inferred from homology"/>
<sequence>MGTIRLMHAKLHRVQVTEANIDYVGSITIDPILLDKVGILPLEEVDIVNLNNGNRFSTYVIPGETGKGEICPNGGAALLCQPGDLLIIYAYENCDRQEVIQRGHTARVIVADEDNKIQDFLIQTLVPCEDGNKVEFHNSSMIDTILESSQT</sequence>
<gene>
    <name evidence="1" type="primary">panD</name>
    <name type="ordered locus">cce_0940</name>
</gene>
<protein>
    <recommendedName>
        <fullName evidence="1">Aspartate 1-decarboxylase</fullName>
        <ecNumber evidence="1">4.1.1.11</ecNumber>
    </recommendedName>
    <alternativeName>
        <fullName evidence="1">Aspartate alpha-decarboxylase</fullName>
    </alternativeName>
    <component>
        <recommendedName>
            <fullName evidence="1">Aspartate 1-decarboxylase beta chain</fullName>
        </recommendedName>
    </component>
    <component>
        <recommendedName>
            <fullName evidence="1">Aspartate 1-decarboxylase alpha chain</fullName>
        </recommendedName>
    </component>
</protein>
<reference key="1">
    <citation type="journal article" date="2008" name="Proc. Natl. Acad. Sci. U.S.A.">
        <title>The genome of Cyanothece 51142, a unicellular diazotrophic cyanobacterium important in the marine nitrogen cycle.</title>
        <authorList>
            <person name="Welsh E.A."/>
            <person name="Liberton M."/>
            <person name="Stoeckel J."/>
            <person name="Loh T."/>
            <person name="Elvitigala T."/>
            <person name="Wang C."/>
            <person name="Wollam A."/>
            <person name="Fulton R.S."/>
            <person name="Clifton S.W."/>
            <person name="Jacobs J.M."/>
            <person name="Aurora R."/>
            <person name="Ghosh B.K."/>
            <person name="Sherman L.A."/>
            <person name="Smith R.D."/>
            <person name="Wilson R.K."/>
            <person name="Pakrasi H.B."/>
        </authorList>
    </citation>
    <scope>NUCLEOTIDE SEQUENCE [LARGE SCALE GENOMIC DNA]</scope>
    <source>
        <strain>ATCC 51142 / BH68</strain>
    </source>
</reference>
<dbReference type="EC" id="4.1.1.11" evidence="1"/>
<dbReference type="EMBL" id="CP000806">
    <property type="protein sequence ID" value="ACB50291.1"/>
    <property type="molecule type" value="Genomic_DNA"/>
</dbReference>
<dbReference type="RefSeq" id="WP_009547161.1">
    <property type="nucleotide sequence ID" value="NC_010546.1"/>
</dbReference>
<dbReference type="SMR" id="B1WSW1"/>
<dbReference type="STRING" id="43989.cce_0940"/>
<dbReference type="KEGG" id="cyt:cce_0940"/>
<dbReference type="eggNOG" id="COG0853">
    <property type="taxonomic scope" value="Bacteria"/>
</dbReference>
<dbReference type="HOGENOM" id="CLU_115305_1_1_3"/>
<dbReference type="OrthoDB" id="9803983at2"/>
<dbReference type="UniPathway" id="UPA00028">
    <property type="reaction ID" value="UER00002"/>
</dbReference>
<dbReference type="Proteomes" id="UP000001203">
    <property type="component" value="Chromosome circular"/>
</dbReference>
<dbReference type="GO" id="GO:0005829">
    <property type="term" value="C:cytosol"/>
    <property type="evidence" value="ECO:0007669"/>
    <property type="project" value="TreeGrafter"/>
</dbReference>
<dbReference type="GO" id="GO:0004068">
    <property type="term" value="F:aspartate 1-decarboxylase activity"/>
    <property type="evidence" value="ECO:0007669"/>
    <property type="project" value="UniProtKB-UniRule"/>
</dbReference>
<dbReference type="GO" id="GO:0006523">
    <property type="term" value="P:alanine biosynthetic process"/>
    <property type="evidence" value="ECO:0007669"/>
    <property type="project" value="InterPro"/>
</dbReference>
<dbReference type="GO" id="GO:0015940">
    <property type="term" value="P:pantothenate biosynthetic process"/>
    <property type="evidence" value="ECO:0007669"/>
    <property type="project" value="UniProtKB-UniRule"/>
</dbReference>
<dbReference type="CDD" id="cd06919">
    <property type="entry name" value="Asp_decarbox"/>
    <property type="match status" value="1"/>
</dbReference>
<dbReference type="Gene3D" id="2.40.40.20">
    <property type="match status" value="1"/>
</dbReference>
<dbReference type="HAMAP" id="MF_00446">
    <property type="entry name" value="PanD"/>
    <property type="match status" value="1"/>
</dbReference>
<dbReference type="InterPro" id="IPR009010">
    <property type="entry name" value="Asp_de-COase-like_dom_sf"/>
</dbReference>
<dbReference type="InterPro" id="IPR003190">
    <property type="entry name" value="Asp_decarbox"/>
</dbReference>
<dbReference type="NCBIfam" id="TIGR00223">
    <property type="entry name" value="panD"/>
    <property type="match status" value="1"/>
</dbReference>
<dbReference type="PANTHER" id="PTHR21012">
    <property type="entry name" value="ASPARTATE 1-DECARBOXYLASE"/>
    <property type="match status" value="1"/>
</dbReference>
<dbReference type="PANTHER" id="PTHR21012:SF0">
    <property type="entry name" value="ASPARTATE 1-DECARBOXYLASE"/>
    <property type="match status" value="1"/>
</dbReference>
<dbReference type="Pfam" id="PF02261">
    <property type="entry name" value="Asp_decarbox"/>
    <property type="match status" value="1"/>
</dbReference>
<dbReference type="SUPFAM" id="SSF50692">
    <property type="entry name" value="ADC-like"/>
    <property type="match status" value="1"/>
</dbReference>
<keyword id="KW-0068">Autocatalytic cleavage</keyword>
<keyword id="KW-0963">Cytoplasm</keyword>
<keyword id="KW-0210">Decarboxylase</keyword>
<keyword id="KW-0456">Lyase</keyword>
<keyword id="KW-0566">Pantothenate biosynthesis</keyword>
<keyword id="KW-0670">Pyruvate</keyword>
<keyword id="KW-1185">Reference proteome</keyword>
<keyword id="KW-0704">Schiff base</keyword>
<keyword id="KW-0865">Zymogen</keyword>
<comment type="function">
    <text evidence="1">Catalyzes the pyruvoyl-dependent decarboxylation of aspartate to produce beta-alanine.</text>
</comment>
<comment type="catalytic activity">
    <reaction evidence="1">
        <text>L-aspartate + H(+) = beta-alanine + CO2</text>
        <dbReference type="Rhea" id="RHEA:19497"/>
        <dbReference type="ChEBI" id="CHEBI:15378"/>
        <dbReference type="ChEBI" id="CHEBI:16526"/>
        <dbReference type="ChEBI" id="CHEBI:29991"/>
        <dbReference type="ChEBI" id="CHEBI:57966"/>
        <dbReference type="EC" id="4.1.1.11"/>
    </reaction>
</comment>
<comment type="cofactor">
    <cofactor evidence="1">
        <name>pyruvate</name>
        <dbReference type="ChEBI" id="CHEBI:15361"/>
    </cofactor>
    <text evidence="1">Binds 1 pyruvoyl group covalently per subunit.</text>
</comment>
<comment type="pathway">
    <text evidence="1">Cofactor biosynthesis; (R)-pantothenate biosynthesis; beta-alanine from L-aspartate: step 1/1.</text>
</comment>
<comment type="subunit">
    <text evidence="1">Heterooctamer of four alpha and four beta subunits.</text>
</comment>
<comment type="subcellular location">
    <subcellularLocation>
        <location evidence="1">Cytoplasm</location>
    </subcellularLocation>
</comment>
<comment type="PTM">
    <text evidence="1">Is synthesized initially as an inactive proenzyme, which is activated by self-cleavage at a specific serine bond to produce a beta-subunit with a hydroxyl group at its C-terminus and an alpha-subunit with a pyruvoyl group at its N-terminus.</text>
</comment>
<comment type="similarity">
    <text evidence="1">Belongs to the PanD family.</text>
</comment>
<evidence type="ECO:0000255" key="1">
    <source>
        <dbReference type="HAMAP-Rule" id="MF_00446"/>
    </source>
</evidence>
<name>PAND_CROS5</name>
<feature type="chain" id="PRO_1000191970" description="Aspartate 1-decarboxylase beta chain" evidence="1">
    <location>
        <begin position="1"/>
        <end position="25"/>
    </location>
</feature>
<feature type="chain" id="PRO_1000191971" description="Aspartate 1-decarboxylase alpha chain" evidence="1">
    <location>
        <begin position="26"/>
        <end position="151"/>
    </location>
</feature>
<feature type="active site" description="Schiff-base intermediate with substrate; via pyruvic acid" evidence="1">
    <location>
        <position position="26"/>
    </location>
</feature>
<feature type="active site" description="Proton donor" evidence="1">
    <location>
        <position position="59"/>
    </location>
</feature>
<feature type="binding site" evidence="1">
    <location>
        <position position="58"/>
    </location>
    <ligand>
        <name>substrate</name>
    </ligand>
</feature>
<feature type="binding site" evidence="1">
    <location>
        <begin position="74"/>
        <end position="76"/>
    </location>
    <ligand>
        <name>substrate</name>
    </ligand>
</feature>
<feature type="modified residue" description="Pyruvic acid (Ser)" evidence="1">
    <location>
        <position position="26"/>
    </location>
</feature>
<organism>
    <name type="scientific">Crocosphaera subtropica (strain ATCC 51142 / BH68)</name>
    <name type="common">Cyanothece sp. (strain ATCC 51142)</name>
    <dbReference type="NCBI Taxonomy" id="43989"/>
    <lineage>
        <taxon>Bacteria</taxon>
        <taxon>Bacillati</taxon>
        <taxon>Cyanobacteriota</taxon>
        <taxon>Cyanophyceae</taxon>
        <taxon>Oscillatoriophycideae</taxon>
        <taxon>Chroococcales</taxon>
        <taxon>Aphanothecaceae</taxon>
        <taxon>Crocosphaera</taxon>
        <taxon>Crocosphaera subtropica</taxon>
    </lineage>
</organism>